<comment type="function">
    <text evidence="1">Catalyzes the hydrolysis of dGTP into dGMP, which is needed among other for the first step of biosynthesis of dZTP (2-amino-2'-deoxyadenosine-5'-triphosphate).</text>
</comment>
<comment type="catalytic activity">
    <reaction evidence="1">
        <text>dGTP + H2O = dGMP + diphosphate + H(+)</text>
        <dbReference type="Rhea" id="RHEA:28362"/>
        <dbReference type="ChEBI" id="CHEBI:15377"/>
        <dbReference type="ChEBI" id="CHEBI:15378"/>
        <dbReference type="ChEBI" id="CHEBI:33019"/>
        <dbReference type="ChEBI" id="CHEBI:57673"/>
        <dbReference type="ChEBI" id="CHEBI:61429"/>
        <dbReference type="EC" id="3.6.1.9"/>
    </reaction>
</comment>
<comment type="catalytic activity">
    <reaction evidence="1">
        <text>dATP + H2O = dAMP + diphosphate + H(+)</text>
        <dbReference type="Rhea" id="RHEA:28334"/>
        <dbReference type="ChEBI" id="CHEBI:15377"/>
        <dbReference type="ChEBI" id="CHEBI:15378"/>
        <dbReference type="ChEBI" id="CHEBI:33019"/>
        <dbReference type="ChEBI" id="CHEBI:58245"/>
        <dbReference type="ChEBI" id="CHEBI:61404"/>
        <dbReference type="EC" id="3.6.1.9"/>
    </reaction>
</comment>
<comment type="cofactor">
    <cofactor evidence="1">
        <name>Co(2+)</name>
        <dbReference type="ChEBI" id="CHEBI:48828"/>
    </cofactor>
</comment>
<comment type="pathway">
    <text evidence="1">Purine metabolism.</text>
</comment>
<comment type="similarity">
    <text evidence="2">Belongs to the Caudovirales dATP/dGTP diphosphohydrolase family.</text>
</comment>
<sequence>MPATVAELQAEIAAWIHPLNPDRRPGGTIAKLLEEIGELIASDRAHDPLEVADVLILALDLATLLGVDVTEAIRAKLAINRARSWARADNGAMRHIPGSDTPSFP</sequence>
<feature type="chain" id="PRO_0000453686" description="dATP/dGTP diphosphohydrolase">
    <location>
        <begin position="1"/>
        <end position="105"/>
    </location>
</feature>
<feature type="helix" evidence="4">
    <location>
        <begin position="5"/>
        <end position="19"/>
    </location>
</feature>
<feature type="helix" evidence="4">
    <location>
        <begin position="25"/>
        <end position="41"/>
    </location>
</feature>
<feature type="helix" evidence="4">
    <location>
        <begin position="48"/>
        <end position="64"/>
    </location>
</feature>
<feature type="helix" evidence="4">
    <location>
        <begin position="69"/>
        <end position="82"/>
    </location>
</feature>
<feature type="strand" evidence="4">
    <location>
        <begin position="85"/>
        <end position="87"/>
    </location>
</feature>
<feature type="strand" evidence="4">
    <location>
        <begin position="91"/>
        <end position="95"/>
    </location>
</feature>
<name>DGTPH_BPS2L</name>
<accession>A0A7U3TBV3</accession>
<evidence type="ECO:0000250" key="1">
    <source>
        <dbReference type="UniProtKB" id="A0A2H5BHG5"/>
    </source>
</evidence>
<evidence type="ECO:0000305" key="2"/>
<evidence type="ECO:0000312" key="3">
    <source>
        <dbReference type="EMBL" id="QQG31318.1"/>
    </source>
</evidence>
<evidence type="ECO:0007829" key="4">
    <source>
        <dbReference type="PDB" id="7ODY"/>
    </source>
</evidence>
<organism>
    <name type="scientific">Cyanophage S-2L</name>
    <name type="common">Cyanobacteria phage S-2L</name>
    <dbReference type="NCBI Taxonomy" id="260586"/>
    <lineage>
        <taxon>Viruses</taxon>
        <taxon>Duplodnaviria</taxon>
        <taxon>Heunggongvirae</taxon>
        <taxon>Uroviricota</taxon>
        <taxon>Caudoviricetes</taxon>
    </lineage>
</organism>
<protein>
    <recommendedName>
        <fullName evidence="2">dATP/dGTP diphosphohydrolase</fullName>
        <ecNumber evidence="1">3.6.1.9</ecNumber>
    </recommendedName>
    <alternativeName>
        <fullName evidence="1">dATP/dGTP pyrophosphohydrolase</fullName>
    </alternativeName>
</protein>
<reference key="1">
    <citation type="submission" date="2020-12" db="EMBL/GenBank/DDBJ databases">
        <authorList>
            <person name="Kaminski P.A."/>
        </authorList>
    </citation>
    <scope>NUCLEOTIDE SEQUENCE [LARGE SCALE GENOMIC DNA]</scope>
</reference>
<gene>
    <name evidence="3" type="ORF">S2L_23</name>
</gene>
<organismHost>
    <name type="scientific">Synechococcus</name>
    <dbReference type="NCBI Taxonomy" id="1129"/>
</organismHost>
<proteinExistence type="evidence at protein level"/>
<keyword id="KW-0002">3D-structure</keyword>
<keyword id="KW-0170">Cobalt</keyword>
<keyword id="KW-0378">Hydrolase</keyword>
<keyword id="KW-0479">Metal-binding</keyword>
<keyword id="KW-0547">Nucleotide-binding</keyword>
<keyword id="KW-1185">Reference proteome</keyword>
<dbReference type="EC" id="3.6.1.9" evidence="1"/>
<dbReference type="EMBL" id="MW334946">
    <property type="protein sequence ID" value="QQG31318.1"/>
    <property type="molecule type" value="Genomic_DNA"/>
</dbReference>
<dbReference type="PDB" id="7ODY">
    <property type="method" value="X-ray"/>
    <property type="resolution" value="1.43 A"/>
    <property type="chains" value="A/B/C/D=1-105"/>
</dbReference>
<dbReference type="PDBsum" id="7ODY"/>
<dbReference type="SMR" id="A0A7U3TBV3"/>
<dbReference type="KEGG" id="ag:QQG31318"/>
<dbReference type="Proteomes" id="UP000595790">
    <property type="component" value="Genome"/>
</dbReference>
<dbReference type="GO" id="GO:0016787">
    <property type="term" value="F:hydrolase activity"/>
    <property type="evidence" value="ECO:0007669"/>
    <property type="project" value="UniProtKB-KW"/>
</dbReference>
<dbReference type="GO" id="GO:0046872">
    <property type="term" value="F:metal ion binding"/>
    <property type="evidence" value="ECO:0007669"/>
    <property type="project" value="UniProtKB-KW"/>
</dbReference>
<dbReference type="GO" id="GO:0000166">
    <property type="term" value="F:nucleotide binding"/>
    <property type="evidence" value="ECO:0007669"/>
    <property type="project" value="UniProtKB-KW"/>
</dbReference>
<dbReference type="Gene3D" id="1.10.287.1080">
    <property type="entry name" value="MazG-like"/>
    <property type="match status" value="1"/>
</dbReference>
<dbReference type="InterPro" id="IPR007538">
    <property type="entry name" value="dATP/dGTP_dipphydrolase_MazZ"/>
</dbReference>
<dbReference type="Pfam" id="PF04447">
    <property type="entry name" value="dATP-dGTP_PPHyd"/>
    <property type="match status" value="1"/>
</dbReference>
<dbReference type="SUPFAM" id="SSF101386">
    <property type="entry name" value="all-alpha NTP pyrophosphatases"/>
    <property type="match status" value="1"/>
</dbReference>